<dbReference type="EMBL" id="U17224">
    <property type="protein sequence ID" value="AAC45995.1"/>
    <property type="molecule type" value="Genomic_DNA"/>
</dbReference>
<dbReference type="RefSeq" id="WP_110163359.1">
    <property type="nucleotide sequence ID" value="NZ_QHMC01000009.1"/>
</dbReference>
<dbReference type="SMR" id="Q46751"/>
<dbReference type="GO" id="GO:0003677">
    <property type="term" value="F:DNA binding"/>
    <property type="evidence" value="ECO:0007669"/>
    <property type="project" value="UniProtKB-KW"/>
</dbReference>
<dbReference type="GO" id="GO:0017000">
    <property type="term" value="P:antibiotic biosynthetic process"/>
    <property type="evidence" value="ECO:0007669"/>
    <property type="project" value="UniProtKB-KW"/>
</dbReference>
<dbReference type="GO" id="GO:0009372">
    <property type="term" value="P:quorum sensing"/>
    <property type="evidence" value="ECO:0007669"/>
    <property type="project" value="UniProtKB-KW"/>
</dbReference>
<dbReference type="GO" id="GO:0006355">
    <property type="term" value="P:regulation of DNA-templated transcription"/>
    <property type="evidence" value="ECO:0007669"/>
    <property type="project" value="InterPro"/>
</dbReference>
<dbReference type="CDD" id="cd06170">
    <property type="entry name" value="LuxR_C_like"/>
    <property type="match status" value="1"/>
</dbReference>
<dbReference type="Gene3D" id="3.30.450.80">
    <property type="entry name" value="Transcription factor LuxR-like, autoinducer-binding domain"/>
    <property type="match status" value="1"/>
</dbReference>
<dbReference type="Gene3D" id="1.10.10.10">
    <property type="entry name" value="Winged helix-like DNA-binding domain superfamily/Winged helix DNA-binding domain"/>
    <property type="match status" value="1"/>
</dbReference>
<dbReference type="InterPro" id="IPR016032">
    <property type="entry name" value="Sig_transdc_resp-reg_C-effctor"/>
</dbReference>
<dbReference type="InterPro" id="IPR005143">
    <property type="entry name" value="TF_LuxR_autoind-bd_dom"/>
</dbReference>
<dbReference type="InterPro" id="IPR036693">
    <property type="entry name" value="TF_LuxR_autoind-bd_dom_sf"/>
</dbReference>
<dbReference type="InterPro" id="IPR000792">
    <property type="entry name" value="Tscrpt_reg_LuxR_C"/>
</dbReference>
<dbReference type="InterPro" id="IPR036388">
    <property type="entry name" value="WH-like_DNA-bd_sf"/>
</dbReference>
<dbReference type="PANTHER" id="PTHR44688">
    <property type="entry name" value="DNA-BINDING TRANSCRIPTIONAL ACTIVATOR DEVR_DOSR"/>
    <property type="match status" value="1"/>
</dbReference>
<dbReference type="PANTHER" id="PTHR44688:SF16">
    <property type="entry name" value="DNA-BINDING TRANSCRIPTIONAL ACTIVATOR DEVR_DOSR"/>
    <property type="match status" value="1"/>
</dbReference>
<dbReference type="Pfam" id="PF03472">
    <property type="entry name" value="Autoind_bind"/>
    <property type="match status" value="1"/>
</dbReference>
<dbReference type="Pfam" id="PF00196">
    <property type="entry name" value="GerE"/>
    <property type="match status" value="1"/>
</dbReference>
<dbReference type="PRINTS" id="PR00038">
    <property type="entry name" value="HTHLUXR"/>
</dbReference>
<dbReference type="SMART" id="SM00421">
    <property type="entry name" value="HTH_LUXR"/>
    <property type="match status" value="1"/>
</dbReference>
<dbReference type="SUPFAM" id="SSF46894">
    <property type="entry name" value="C-terminal effector domain of the bipartite response regulators"/>
    <property type="match status" value="1"/>
</dbReference>
<dbReference type="SUPFAM" id="SSF75516">
    <property type="entry name" value="Pheromone-binding domain of LuxR-like quorum-sensing transcription factors"/>
    <property type="match status" value="1"/>
</dbReference>
<dbReference type="PROSITE" id="PS00622">
    <property type="entry name" value="HTH_LUXR_1"/>
    <property type="match status" value="1"/>
</dbReference>
<dbReference type="PROSITE" id="PS50043">
    <property type="entry name" value="HTH_LUXR_2"/>
    <property type="match status" value="1"/>
</dbReference>
<evidence type="ECO:0000255" key="1">
    <source>
        <dbReference type="PROSITE-ProRule" id="PRU00411"/>
    </source>
</evidence>
<evidence type="ECO:0000305" key="2"/>
<gene>
    <name type="primary">carR</name>
</gene>
<protein>
    <recommendedName>
        <fullName>Transcriptional activator protein CarR</fullName>
    </recommendedName>
</protein>
<reference key="1">
    <citation type="journal article" date="1995" name="Microbiology">
        <title>Carbapenem antibiotic production in Erwinia carotovora is regulated by CarR, a homologue of the LuxR transcriptional activator.</title>
        <authorList>
            <person name="McGowan S.J."/>
            <person name="Sebaihia M."/>
            <person name="Jones S."/>
            <person name="Yu B."/>
            <person name="Bainton N."/>
            <person name="Chan P.F."/>
            <person name="Bycroft B."/>
            <person name="Stewart G.S.A.B."/>
            <person name="Williams P."/>
            <person name="Salmond G.P.C."/>
        </authorList>
    </citation>
    <scope>NUCLEOTIDE SEQUENCE [GENOMIC DNA]</scope>
    <source>
        <strain>ATCC 39048 / GS101 / SC 12</strain>
    </source>
</reference>
<sequence>MDHEIHSFIKRKLKGVGDVWFSYFMMSKNSTSQPYIISNYPEAWMKEYIKKEMFLSDPIIVASLARITPFSWDDNDIVTLRAKNQDVFISSVQHDISSGYTFVLHDHDNNVATLSIANHLEDANFEKCMKNHENDLQMLLVNVHEKVMAYQRAINDQDNPPDNSRNALLSPRETEVLFLVSSGRTYKEVSRILGISEVTVKFHINNSVRKLDVINSRHAITKALELNLFHSPCEPVVMKHMDAR</sequence>
<proteinExistence type="inferred from homology"/>
<name>CARR_PECCC</name>
<accession>Q46751</accession>
<keyword id="KW-0010">Activator</keyword>
<keyword id="KW-0045">Antibiotic biosynthesis</keyword>
<keyword id="KW-0238">DNA-binding</keyword>
<keyword id="KW-0673">Quorum sensing</keyword>
<keyword id="KW-0804">Transcription</keyword>
<keyword id="KW-0805">Transcription regulation</keyword>
<organism>
    <name type="scientific">Pectobacterium carotovorum subsp. carotovorum</name>
    <name type="common">Erwinia carotovora subsp. carotovora</name>
    <dbReference type="NCBI Taxonomy" id="555"/>
    <lineage>
        <taxon>Bacteria</taxon>
        <taxon>Pseudomonadati</taxon>
        <taxon>Pseudomonadota</taxon>
        <taxon>Gammaproteobacteria</taxon>
        <taxon>Enterobacterales</taxon>
        <taxon>Pectobacteriaceae</taxon>
        <taxon>Pectobacterium</taxon>
    </lineage>
</organism>
<feature type="chain" id="PRO_0000184142" description="Transcriptional activator protein CarR">
    <location>
        <begin position="1"/>
        <end position="244"/>
    </location>
</feature>
<feature type="domain" description="HTH luxR-type" evidence="1">
    <location>
        <begin position="162"/>
        <end position="227"/>
    </location>
</feature>
<feature type="DNA-binding region" description="H-T-H motif" evidence="1">
    <location>
        <begin position="186"/>
        <end position="205"/>
    </location>
</feature>
<comment type="function">
    <text>Functions as an OHLL responsive transcriptional regulator which acts in the control of the biosynthesis of carbapenem antibiotics.</text>
</comment>
<comment type="similarity">
    <text evidence="2">Belongs to the autoinducer-regulated transcriptional regulatory protein family.</text>
</comment>